<evidence type="ECO:0000250" key="1"/>
<evidence type="ECO:0000250" key="2">
    <source>
        <dbReference type="UniProtKB" id="Q9BPZ3"/>
    </source>
</evidence>
<evidence type="ECO:0000256" key="3">
    <source>
        <dbReference type="SAM" id="MobiDB-lite"/>
    </source>
</evidence>
<evidence type="ECO:0000305" key="4"/>
<feature type="chain" id="PRO_0000252689" description="Polyadenylate-binding protein-interacting protein 2">
    <location>
        <begin position="1"/>
        <end position="127"/>
    </location>
</feature>
<feature type="region of interest" description="Disordered" evidence="3">
    <location>
        <begin position="1"/>
        <end position="24"/>
    </location>
</feature>
<feature type="region of interest" description="PABPC1-interacting motif-1 (PAM1)" evidence="1">
    <location>
        <begin position="22"/>
        <end position="75"/>
    </location>
</feature>
<feature type="region of interest" description="PABPC1-interacting motif-2 (PAM2)" evidence="1">
    <location>
        <begin position="105"/>
        <end position="120"/>
    </location>
</feature>
<feature type="compositionally biased region" description="Low complexity" evidence="3">
    <location>
        <begin position="1"/>
        <end position="15"/>
    </location>
</feature>
<proteinExistence type="evidence at transcript level"/>
<comment type="function">
    <text evidence="1">Acts as a repressor in the regulation of translation initiation of poly(A)-containing mRNAs. Its inhibitory activity on translation is mediated via its action on PABPC1. Displaces the interaction of PABPC1 with poly(A) RNA and competes with PAIP1 for binding to PABPC1. Its association with PABPC1 results in disruption of the cytoplasmic poly(A) RNP structure organization (By similarity).</text>
</comment>
<comment type="subcellular location">
    <subcellularLocation>
        <location evidence="1">Cytoplasm</location>
    </subcellularLocation>
</comment>
<comment type="domain">
    <text evidence="1">Only the PABPC1-interacting motif-1 (PAM1) interferes with the binding of PABPC1 to poly(A) RNA and translation initiation.</text>
</comment>
<comment type="PTM">
    <text evidence="2">Ubiquitinated, leading to its degradation by the proteasome.</text>
</comment>
<comment type="similarity">
    <text evidence="4">Belongs to the PAIP2 family.</text>
</comment>
<organism>
    <name type="scientific">Gallus gallus</name>
    <name type="common">Chicken</name>
    <dbReference type="NCBI Taxonomy" id="9031"/>
    <lineage>
        <taxon>Eukaryota</taxon>
        <taxon>Metazoa</taxon>
        <taxon>Chordata</taxon>
        <taxon>Craniata</taxon>
        <taxon>Vertebrata</taxon>
        <taxon>Euteleostomi</taxon>
        <taxon>Archelosauria</taxon>
        <taxon>Archosauria</taxon>
        <taxon>Dinosauria</taxon>
        <taxon>Saurischia</taxon>
        <taxon>Theropoda</taxon>
        <taxon>Coelurosauria</taxon>
        <taxon>Aves</taxon>
        <taxon>Neognathae</taxon>
        <taxon>Galloanserae</taxon>
        <taxon>Galliformes</taxon>
        <taxon>Phasianidae</taxon>
        <taxon>Phasianinae</taxon>
        <taxon>Gallus</taxon>
    </lineage>
</organism>
<gene>
    <name type="primary">PAIP2</name>
    <name type="ORF">RCJMB04_16b5</name>
</gene>
<keyword id="KW-0963">Cytoplasm</keyword>
<keyword id="KW-1185">Reference proteome</keyword>
<keyword id="KW-0810">Translation regulation</keyword>
<keyword id="KW-0832">Ubl conjugation</keyword>
<reference key="1">
    <citation type="journal article" date="2005" name="Genome Biol.">
        <title>Full-length cDNAs from chicken bursal lymphocytes to facilitate gene function analysis.</title>
        <authorList>
            <person name="Caldwell R.B."/>
            <person name="Kierzek A.M."/>
            <person name="Arakawa H."/>
            <person name="Bezzubov Y."/>
            <person name="Zaim J."/>
            <person name="Fiedler P."/>
            <person name="Kutter S."/>
            <person name="Blagodatski A."/>
            <person name="Kostovska D."/>
            <person name="Koter M."/>
            <person name="Plachy J."/>
            <person name="Carninci P."/>
            <person name="Hayashizaki Y."/>
            <person name="Buerstedde J.-M."/>
        </authorList>
    </citation>
    <scope>NUCLEOTIDE SEQUENCE [LARGE SCALE MRNA]</scope>
    <source>
        <strain>CB</strain>
        <tissue>Bursa of Fabricius</tissue>
    </source>
</reference>
<accession>Q5ZJS6</accession>
<protein>
    <recommendedName>
        <fullName>Polyadenylate-binding protein-interacting protein 2</fullName>
        <shortName>PABP-interacting protein 2</shortName>
        <shortName>PAIP-2</shortName>
        <shortName>Poly(A)-binding protein-interacting protein 2</shortName>
    </recommendedName>
</protein>
<sequence length="127" mass="15043">MKDPSRSSTSPSIISEDVIINGHSHEDDNPFAEYMWMENEEEFNRQIEEELWEEEFIERCFQEMLEEEEEHEWFIPARDLPQTMDQIQDQFNDLVISDSSSLEDLVVKSNLNPNAKEFVPGVKYLNI</sequence>
<name>PAIP2_CHICK</name>
<dbReference type="EMBL" id="AJ720358">
    <property type="protein sequence ID" value="CAG32017.1"/>
    <property type="molecule type" value="mRNA"/>
</dbReference>
<dbReference type="RefSeq" id="NP_001007833.1">
    <property type="nucleotide sequence ID" value="NM_001007832.1"/>
</dbReference>
<dbReference type="FunCoup" id="Q5ZJS6">
    <property type="interactions" value="1462"/>
</dbReference>
<dbReference type="STRING" id="9031.ENSGALP00000003912"/>
<dbReference type="PaxDb" id="9031-ENSGALP00000003912"/>
<dbReference type="Ensembl" id="ENSGALT00010019951.1">
    <property type="protein sequence ID" value="ENSGALP00010011499.1"/>
    <property type="gene ID" value="ENSGALG00010008336.1"/>
</dbReference>
<dbReference type="GeneID" id="416187"/>
<dbReference type="KEGG" id="gga:416187"/>
<dbReference type="CTD" id="400961"/>
<dbReference type="VEuPathDB" id="HostDB:geneid_416187"/>
<dbReference type="eggNOG" id="ENOG502RZKX">
    <property type="taxonomic scope" value="Eukaryota"/>
</dbReference>
<dbReference type="GeneTree" id="ENSGT00390000017284"/>
<dbReference type="HOGENOM" id="CLU_134152_0_0_1"/>
<dbReference type="InParanoid" id="Q5ZJS6"/>
<dbReference type="OMA" id="PGIQKHN"/>
<dbReference type="OrthoDB" id="5985142at2759"/>
<dbReference type="PhylomeDB" id="Q5ZJS6"/>
<dbReference type="PRO" id="PR:Q5ZJS6"/>
<dbReference type="Proteomes" id="UP000000539">
    <property type="component" value="Chromosome 13"/>
</dbReference>
<dbReference type="Bgee" id="ENSGALG00000002488">
    <property type="expression patterns" value="Expressed in testis and 12 other cell types or tissues"/>
</dbReference>
<dbReference type="GO" id="GO:0005737">
    <property type="term" value="C:cytoplasm"/>
    <property type="evidence" value="ECO:0000250"/>
    <property type="project" value="AgBase"/>
</dbReference>
<dbReference type="GO" id="GO:0000900">
    <property type="term" value="F:mRNA regulatory element binding translation repressor activity"/>
    <property type="evidence" value="ECO:0007669"/>
    <property type="project" value="InterPro"/>
</dbReference>
<dbReference type="GO" id="GO:0030371">
    <property type="term" value="F:translation repressor activity"/>
    <property type="evidence" value="ECO:0000250"/>
    <property type="project" value="AgBase"/>
</dbReference>
<dbReference type="GO" id="GO:0017148">
    <property type="term" value="P:negative regulation of translation"/>
    <property type="evidence" value="ECO:0000318"/>
    <property type="project" value="GO_Central"/>
</dbReference>
<dbReference type="GO" id="GO:0045947">
    <property type="term" value="P:negative regulation of translational initiation"/>
    <property type="evidence" value="ECO:0000250"/>
    <property type="project" value="AgBase"/>
</dbReference>
<dbReference type="InterPro" id="IPR040396">
    <property type="entry name" value="PAIP2-like"/>
</dbReference>
<dbReference type="InterPro" id="IPR009818">
    <property type="entry name" value="PAM2_motif"/>
</dbReference>
<dbReference type="PANTHER" id="PTHR13154">
    <property type="entry name" value="POLYADENYLATE-BINDING PROTEIN-INTERACTING PROTEIN 2"/>
    <property type="match status" value="1"/>
</dbReference>
<dbReference type="PANTHER" id="PTHR13154:SF2">
    <property type="entry name" value="POLYADENYLATE-BINDING PROTEIN-INTERACTING PROTEIN 2"/>
    <property type="match status" value="1"/>
</dbReference>
<dbReference type="Pfam" id="PF07145">
    <property type="entry name" value="PAM2"/>
    <property type="match status" value="1"/>
</dbReference>